<protein>
    <recommendedName>
        <fullName>FERM, ARHGEF and pleckstrin domain-containing protein 1</fullName>
    </recommendedName>
    <alternativeName>
        <fullName>Chondrocyte-derived ezrin-like protein</fullName>
    </alternativeName>
    <alternativeName>
        <fullName>FERM, RhoGEF and pleckstrin domain-containing protein 1</fullName>
    </alternativeName>
    <alternativeName>
        <fullName>Pleckstrin homology domain-containing family C member 2</fullName>
        <shortName>PH domain-containing family C member 2</shortName>
    </alternativeName>
</protein>
<dbReference type="EMBL" id="AB008430">
    <property type="protein sequence ID" value="BAA24267.1"/>
    <property type="molecule type" value="mRNA"/>
</dbReference>
<dbReference type="EMBL" id="AL136300">
    <property type="status" value="NOT_ANNOTATED_CDS"/>
    <property type="molecule type" value="Genomic_DNA"/>
</dbReference>
<dbReference type="EMBL" id="AL137249">
    <property type="status" value="NOT_ANNOTATED_CDS"/>
    <property type="molecule type" value="Genomic_DNA"/>
</dbReference>
<dbReference type="EMBL" id="AL161896">
    <property type="status" value="NOT_ANNOTATED_CDS"/>
    <property type="molecule type" value="Genomic_DNA"/>
</dbReference>
<dbReference type="EMBL" id="AL445223">
    <property type="status" value="NOT_ANNOTATED_CDS"/>
    <property type="molecule type" value="Genomic_DNA"/>
</dbReference>
<dbReference type="EMBL" id="BC041595">
    <property type="protein sequence ID" value="AAH41595.1"/>
    <property type="molecule type" value="mRNA"/>
</dbReference>
<dbReference type="EMBL" id="BC065020">
    <property type="status" value="NOT_ANNOTATED_CDS"/>
    <property type="molecule type" value="mRNA"/>
</dbReference>
<dbReference type="EMBL" id="BC071592">
    <property type="protein sequence ID" value="AAH71592.1"/>
    <property type="molecule type" value="mRNA"/>
</dbReference>
<dbReference type="CCDS" id="CCDS32000.1">
    <molecule id="Q9Y4F1-3"/>
</dbReference>
<dbReference type="CCDS" id="CCDS66572.1">
    <molecule id="Q9Y4F1-2"/>
</dbReference>
<dbReference type="CCDS" id="CCDS9487.1">
    <molecule id="Q9Y4F1-1"/>
</dbReference>
<dbReference type="PIR" id="JC5795">
    <property type="entry name" value="JC5795"/>
</dbReference>
<dbReference type="RefSeq" id="NP_001001715.2">
    <molecule id="Q9Y4F1-3"/>
    <property type="nucleotide sequence ID" value="NM_001001715.4"/>
</dbReference>
<dbReference type="RefSeq" id="NP_001273768.1">
    <property type="nucleotide sequence ID" value="NM_001286839.1"/>
</dbReference>
<dbReference type="RefSeq" id="NP_005757.1">
    <molecule id="Q9Y4F1-1"/>
    <property type="nucleotide sequence ID" value="NM_005766.4"/>
</dbReference>
<dbReference type="RefSeq" id="XP_016875801.1">
    <property type="nucleotide sequence ID" value="XM_017020312.1"/>
</dbReference>
<dbReference type="PDB" id="4H6Y">
    <property type="method" value="X-ray"/>
    <property type="resolution" value="4.09 A"/>
    <property type="chains" value="A/B=539-1035"/>
</dbReference>
<dbReference type="PDBsum" id="4H6Y"/>
<dbReference type="SMR" id="Q9Y4F1"/>
<dbReference type="BioGRID" id="115462">
    <property type="interactions" value="155"/>
</dbReference>
<dbReference type="FunCoup" id="Q9Y4F1">
    <property type="interactions" value="821"/>
</dbReference>
<dbReference type="IntAct" id="Q9Y4F1">
    <property type="interactions" value="76"/>
</dbReference>
<dbReference type="MINT" id="Q9Y4F1"/>
<dbReference type="STRING" id="9606.ENSP00000486285"/>
<dbReference type="CarbonylDB" id="Q9Y4F1"/>
<dbReference type="GlyGen" id="Q9Y4F1">
    <property type="glycosylation" value="1 site"/>
</dbReference>
<dbReference type="iPTMnet" id="Q9Y4F1"/>
<dbReference type="PhosphoSitePlus" id="Q9Y4F1"/>
<dbReference type="SwissPalm" id="Q9Y4F1"/>
<dbReference type="BioMuta" id="FARP1"/>
<dbReference type="DMDM" id="74762059"/>
<dbReference type="jPOST" id="Q9Y4F1"/>
<dbReference type="MassIVE" id="Q9Y4F1"/>
<dbReference type="PaxDb" id="9606-ENSP00000471242"/>
<dbReference type="PeptideAtlas" id="Q9Y4F1"/>
<dbReference type="ProteomicsDB" id="86186">
    <molecule id="Q9Y4F1-1"/>
</dbReference>
<dbReference type="ProteomicsDB" id="86187">
    <molecule id="Q9Y4F1-2"/>
</dbReference>
<dbReference type="ProteomicsDB" id="86188">
    <molecule id="Q9Y4F1-3"/>
</dbReference>
<dbReference type="Pumba" id="Q9Y4F1"/>
<dbReference type="Antibodypedia" id="619">
    <property type="antibodies" value="214 antibodies from 21 providers"/>
</dbReference>
<dbReference type="DNASU" id="10160"/>
<dbReference type="Ensembl" id="ENST00000319562.11">
    <molecule id="Q9Y4F1-1"/>
    <property type="protein sequence ID" value="ENSP00000322926.6"/>
    <property type="gene ID" value="ENSG00000152767.17"/>
</dbReference>
<dbReference type="Ensembl" id="ENST00000376581.9">
    <molecule id="Q9Y4F1-3"/>
    <property type="protein sequence ID" value="ENSP00000365765.4"/>
    <property type="gene ID" value="ENSG00000152767.17"/>
</dbReference>
<dbReference type="GeneID" id="10160"/>
<dbReference type="KEGG" id="hsa:10160"/>
<dbReference type="MANE-Select" id="ENST00000319562.11">
    <property type="protein sequence ID" value="ENSP00000322926.6"/>
    <property type="RefSeq nucleotide sequence ID" value="NM_005766.4"/>
    <property type="RefSeq protein sequence ID" value="NP_005757.1"/>
</dbReference>
<dbReference type="UCSC" id="uc001vni.5">
    <molecule id="Q9Y4F1-1"/>
    <property type="organism name" value="human"/>
</dbReference>
<dbReference type="AGR" id="HGNC:3591"/>
<dbReference type="CTD" id="10160"/>
<dbReference type="DisGeNET" id="10160"/>
<dbReference type="GeneCards" id="FARP1"/>
<dbReference type="HGNC" id="HGNC:3591">
    <property type="gene designation" value="FARP1"/>
</dbReference>
<dbReference type="HPA" id="ENSG00000152767">
    <property type="expression patterns" value="Low tissue specificity"/>
</dbReference>
<dbReference type="MIM" id="602654">
    <property type="type" value="gene"/>
</dbReference>
<dbReference type="neXtProt" id="NX_Q9Y4F1"/>
<dbReference type="OpenTargets" id="ENSG00000152767"/>
<dbReference type="PharmGKB" id="PA28004"/>
<dbReference type="VEuPathDB" id="HostDB:ENSG00000152767"/>
<dbReference type="eggNOG" id="KOG3531">
    <property type="taxonomic scope" value="Eukaryota"/>
</dbReference>
<dbReference type="GeneTree" id="ENSGT00940000155318"/>
<dbReference type="HOGENOM" id="CLU_012301_0_0_1"/>
<dbReference type="InParanoid" id="Q9Y4F1"/>
<dbReference type="OrthoDB" id="9990815at2759"/>
<dbReference type="PAN-GO" id="Q9Y4F1">
    <property type="GO annotations" value="1 GO annotation based on evolutionary models"/>
</dbReference>
<dbReference type="PhylomeDB" id="Q9Y4F1"/>
<dbReference type="TreeFam" id="TF351276"/>
<dbReference type="PathwayCommons" id="Q9Y4F1"/>
<dbReference type="Reactome" id="R-HSA-8980692">
    <property type="pathway name" value="RHOA GTPase cycle"/>
</dbReference>
<dbReference type="Reactome" id="R-HSA-9013148">
    <property type="pathway name" value="CDC42 GTPase cycle"/>
</dbReference>
<dbReference type="Reactome" id="R-HSA-9013149">
    <property type="pathway name" value="RAC1 GTPase cycle"/>
</dbReference>
<dbReference type="Reactome" id="R-HSA-9035034">
    <property type="pathway name" value="RHOF GTPase cycle"/>
</dbReference>
<dbReference type="SignaLink" id="Q9Y4F1"/>
<dbReference type="BioGRID-ORCS" id="10160">
    <property type="hits" value="15 hits in 1145 CRISPR screens"/>
</dbReference>
<dbReference type="CD-CODE" id="FB4E32DD">
    <property type="entry name" value="Presynaptic clusters and postsynaptic densities"/>
</dbReference>
<dbReference type="ChiTaRS" id="FARP1">
    <property type="organism name" value="human"/>
</dbReference>
<dbReference type="EvolutionaryTrace" id="Q9Y4F1"/>
<dbReference type="GeneWiki" id="FARP1"/>
<dbReference type="GenomeRNAi" id="10160"/>
<dbReference type="Pharos" id="Q9Y4F1">
    <property type="development level" value="Tbio"/>
</dbReference>
<dbReference type="PRO" id="PR:Q9Y4F1"/>
<dbReference type="Proteomes" id="UP000005640">
    <property type="component" value="Chromosome 13"/>
</dbReference>
<dbReference type="RNAct" id="Q9Y4F1">
    <property type="molecule type" value="protein"/>
</dbReference>
<dbReference type="Bgee" id="ENSG00000152767">
    <property type="expression patterns" value="Expressed in renal medulla and 204 other cell types or tissues"/>
</dbReference>
<dbReference type="ExpressionAtlas" id="Q9Y4F1">
    <property type="expression patterns" value="baseline and differential"/>
</dbReference>
<dbReference type="GO" id="GO:0009898">
    <property type="term" value="C:cytoplasmic side of plasma membrane"/>
    <property type="evidence" value="ECO:0000250"/>
    <property type="project" value="UniProtKB"/>
</dbReference>
<dbReference type="GO" id="GO:0005856">
    <property type="term" value="C:cytoskeleton"/>
    <property type="evidence" value="ECO:0000304"/>
    <property type="project" value="ProtInc"/>
</dbReference>
<dbReference type="GO" id="GO:0005829">
    <property type="term" value="C:cytosol"/>
    <property type="evidence" value="ECO:0000250"/>
    <property type="project" value="UniProtKB"/>
</dbReference>
<dbReference type="GO" id="GO:0030425">
    <property type="term" value="C:dendrite"/>
    <property type="evidence" value="ECO:0000250"/>
    <property type="project" value="UniProtKB"/>
</dbReference>
<dbReference type="GO" id="GO:0043197">
    <property type="term" value="C:dendritic spine"/>
    <property type="evidence" value="ECO:0007669"/>
    <property type="project" value="UniProtKB-SubCell"/>
</dbReference>
<dbReference type="GO" id="GO:0098890">
    <property type="term" value="C:extrinsic component of postsynaptic membrane"/>
    <property type="evidence" value="ECO:0007669"/>
    <property type="project" value="Ensembl"/>
</dbReference>
<dbReference type="GO" id="GO:0030175">
    <property type="term" value="C:filopodium"/>
    <property type="evidence" value="ECO:0007669"/>
    <property type="project" value="UniProtKB-SubCell"/>
</dbReference>
<dbReference type="GO" id="GO:0098978">
    <property type="term" value="C:glutamatergic synapse"/>
    <property type="evidence" value="ECO:0007669"/>
    <property type="project" value="Ensembl"/>
</dbReference>
<dbReference type="GO" id="GO:0008092">
    <property type="term" value="F:cytoskeletal protein binding"/>
    <property type="evidence" value="ECO:0007669"/>
    <property type="project" value="InterPro"/>
</dbReference>
<dbReference type="GO" id="GO:0005085">
    <property type="term" value="F:guanyl-nucleotide exchange factor activity"/>
    <property type="evidence" value="ECO:0000250"/>
    <property type="project" value="UniProtKB"/>
</dbReference>
<dbReference type="GO" id="GO:0031267">
    <property type="term" value="F:small GTPase binding"/>
    <property type="evidence" value="ECO:0007669"/>
    <property type="project" value="Ensembl"/>
</dbReference>
<dbReference type="GO" id="GO:0048813">
    <property type="term" value="P:dendrite morphogenesis"/>
    <property type="evidence" value="ECO:0000250"/>
    <property type="project" value="UniProtKB"/>
</dbReference>
<dbReference type="GO" id="GO:0007167">
    <property type="term" value="P:enzyme-linked receptor protein signaling pathway"/>
    <property type="evidence" value="ECO:0007669"/>
    <property type="project" value="Ensembl"/>
</dbReference>
<dbReference type="GO" id="GO:1904395">
    <property type="term" value="P:positive regulation of skeletal muscle acetylcholine-gated channel clustering"/>
    <property type="evidence" value="ECO:0007669"/>
    <property type="project" value="Ensembl"/>
</dbReference>
<dbReference type="GO" id="GO:0098974">
    <property type="term" value="P:postsynaptic actin cytoskeleton organization"/>
    <property type="evidence" value="ECO:0007669"/>
    <property type="project" value="Ensembl"/>
</dbReference>
<dbReference type="GO" id="GO:0016601">
    <property type="term" value="P:Rac protein signal transduction"/>
    <property type="evidence" value="ECO:0007669"/>
    <property type="project" value="Ensembl"/>
</dbReference>
<dbReference type="GO" id="GO:1905606">
    <property type="term" value="P:regulation of presynapse assembly"/>
    <property type="evidence" value="ECO:0007669"/>
    <property type="project" value="Ensembl"/>
</dbReference>
<dbReference type="GO" id="GO:0098942">
    <property type="term" value="P:retrograde trans-synaptic signaling by trans-synaptic protein complex"/>
    <property type="evidence" value="ECO:0007669"/>
    <property type="project" value="Ensembl"/>
</dbReference>
<dbReference type="GO" id="GO:0007416">
    <property type="term" value="P:synapse assembly"/>
    <property type="evidence" value="ECO:0000250"/>
    <property type="project" value="UniProtKB"/>
</dbReference>
<dbReference type="CDD" id="cd14473">
    <property type="entry name" value="FERM_B-lobe"/>
    <property type="match status" value="1"/>
</dbReference>
<dbReference type="CDD" id="cd13193">
    <property type="entry name" value="FERM_C_FARP1-like"/>
    <property type="match status" value="1"/>
</dbReference>
<dbReference type="CDD" id="cd01220">
    <property type="entry name" value="PH1_FARP1-like"/>
    <property type="match status" value="1"/>
</dbReference>
<dbReference type="CDD" id="cd13235">
    <property type="entry name" value="PH2_FARP1-like"/>
    <property type="match status" value="1"/>
</dbReference>
<dbReference type="CDD" id="cd00160">
    <property type="entry name" value="RhoGEF"/>
    <property type="match status" value="1"/>
</dbReference>
<dbReference type="DisProt" id="DP02833"/>
<dbReference type="FunFam" id="2.30.29.30:FF:000002">
    <property type="entry name" value="Band 4.1-like protein 5 isoform 1"/>
    <property type="match status" value="1"/>
</dbReference>
<dbReference type="FunFam" id="3.10.20.90:FF:000040">
    <property type="entry name" value="FERM, RhoGEF and pleckstrin domain-containing protein"/>
    <property type="match status" value="1"/>
</dbReference>
<dbReference type="FunFam" id="1.20.80.10:FF:000005">
    <property type="entry name" value="FERM, RhoGEF and pleckstrin domain-containing protein 1"/>
    <property type="match status" value="1"/>
</dbReference>
<dbReference type="FunFam" id="1.20.900.10:FF:000021">
    <property type="entry name" value="FERM, RhoGEF and pleckstrin domain-containing protein 1"/>
    <property type="match status" value="1"/>
</dbReference>
<dbReference type="FunFam" id="2.30.29.30:FF:000046">
    <property type="entry name" value="FERM, RhoGEF and pleckstrin domain-containing protein 1"/>
    <property type="match status" value="1"/>
</dbReference>
<dbReference type="Gene3D" id="1.20.80.10">
    <property type="match status" value="1"/>
</dbReference>
<dbReference type="Gene3D" id="1.20.900.10">
    <property type="entry name" value="Dbl homology (DH) domain"/>
    <property type="match status" value="1"/>
</dbReference>
<dbReference type="Gene3D" id="3.10.20.90">
    <property type="entry name" value="Phosphatidylinositol 3-kinase Catalytic Subunit, Chain A, domain 1"/>
    <property type="match status" value="1"/>
</dbReference>
<dbReference type="Gene3D" id="2.30.29.30">
    <property type="entry name" value="Pleckstrin-homology domain (PH domain)/Phosphotyrosine-binding domain (PTB)"/>
    <property type="match status" value="3"/>
</dbReference>
<dbReference type="InterPro" id="IPR019749">
    <property type="entry name" value="Band_41_domain"/>
</dbReference>
<dbReference type="InterPro" id="IPR035899">
    <property type="entry name" value="DBL_dom_sf"/>
</dbReference>
<dbReference type="InterPro" id="IPR000219">
    <property type="entry name" value="DH_dom"/>
</dbReference>
<dbReference type="InterPro" id="IPR000798">
    <property type="entry name" value="Ez/rad/moesin-like"/>
</dbReference>
<dbReference type="InterPro" id="IPR014847">
    <property type="entry name" value="FA"/>
</dbReference>
<dbReference type="InterPro" id="IPR041788">
    <property type="entry name" value="FARP1/FARP2/FRMD7_FERM_C"/>
</dbReference>
<dbReference type="InterPro" id="IPR014352">
    <property type="entry name" value="FERM/acyl-CoA-bd_prot_sf"/>
</dbReference>
<dbReference type="InterPro" id="IPR035963">
    <property type="entry name" value="FERM_2"/>
</dbReference>
<dbReference type="InterPro" id="IPR019748">
    <property type="entry name" value="FERM_central"/>
</dbReference>
<dbReference type="InterPro" id="IPR019747">
    <property type="entry name" value="FERM_CS"/>
</dbReference>
<dbReference type="InterPro" id="IPR000299">
    <property type="entry name" value="FERM_domain"/>
</dbReference>
<dbReference type="InterPro" id="IPR018979">
    <property type="entry name" value="FERM_N"/>
</dbReference>
<dbReference type="InterPro" id="IPR018980">
    <property type="entry name" value="FERM_PH-like_C"/>
</dbReference>
<dbReference type="InterPro" id="IPR011993">
    <property type="entry name" value="PH-like_dom_sf"/>
</dbReference>
<dbReference type="InterPro" id="IPR001849">
    <property type="entry name" value="PH_domain"/>
</dbReference>
<dbReference type="InterPro" id="IPR051835">
    <property type="entry name" value="RAC1-GEF"/>
</dbReference>
<dbReference type="InterPro" id="IPR029071">
    <property type="entry name" value="Ubiquitin-like_domsf"/>
</dbReference>
<dbReference type="PANTHER" id="PTHR45858">
    <property type="entry name" value="FERM DOMAIN CONTAINING PROTEIN"/>
    <property type="match status" value="1"/>
</dbReference>
<dbReference type="PANTHER" id="PTHR45858:SF2">
    <property type="entry name" value="FERM, ARHGEF AND PLECKSTRIN DOMAIN-CONTAINING PROTEIN 1"/>
    <property type="match status" value="1"/>
</dbReference>
<dbReference type="Pfam" id="PF08736">
    <property type="entry name" value="FA"/>
    <property type="match status" value="1"/>
</dbReference>
<dbReference type="Pfam" id="PF09380">
    <property type="entry name" value="FERM_C"/>
    <property type="match status" value="1"/>
</dbReference>
<dbReference type="Pfam" id="PF00373">
    <property type="entry name" value="FERM_M"/>
    <property type="match status" value="1"/>
</dbReference>
<dbReference type="Pfam" id="PF09379">
    <property type="entry name" value="FERM_N"/>
    <property type="match status" value="1"/>
</dbReference>
<dbReference type="Pfam" id="PF00169">
    <property type="entry name" value="PH"/>
    <property type="match status" value="2"/>
</dbReference>
<dbReference type="Pfam" id="PF00621">
    <property type="entry name" value="RhoGEF"/>
    <property type="match status" value="1"/>
</dbReference>
<dbReference type="PRINTS" id="PR00935">
    <property type="entry name" value="BAND41"/>
</dbReference>
<dbReference type="PRINTS" id="PR00661">
    <property type="entry name" value="ERMFAMILY"/>
</dbReference>
<dbReference type="SMART" id="SM00295">
    <property type="entry name" value="B41"/>
    <property type="match status" value="1"/>
</dbReference>
<dbReference type="SMART" id="SM01195">
    <property type="entry name" value="FA"/>
    <property type="match status" value="1"/>
</dbReference>
<dbReference type="SMART" id="SM01196">
    <property type="entry name" value="FERM_C"/>
    <property type="match status" value="1"/>
</dbReference>
<dbReference type="SMART" id="SM00233">
    <property type="entry name" value="PH"/>
    <property type="match status" value="2"/>
</dbReference>
<dbReference type="SMART" id="SM00325">
    <property type="entry name" value="RhoGEF"/>
    <property type="match status" value="1"/>
</dbReference>
<dbReference type="SUPFAM" id="SSF48065">
    <property type="entry name" value="DBL homology domain (DH-domain)"/>
    <property type="match status" value="1"/>
</dbReference>
<dbReference type="SUPFAM" id="SSF50729">
    <property type="entry name" value="PH domain-like"/>
    <property type="match status" value="3"/>
</dbReference>
<dbReference type="SUPFAM" id="SSF47031">
    <property type="entry name" value="Second domain of FERM"/>
    <property type="match status" value="1"/>
</dbReference>
<dbReference type="SUPFAM" id="SSF54236">
    <property type="entry name" value="Ubiquitin-like"/>
    <property type="match status" value="1"/>
</dbReference>
<dbReference type="PROSITE" id="PS50010">
    <property type="entry name" value="DH_2"/>
    <property type="match status" value="1"/>
</dbReference>
<dbReference type="PROSITE" id="PS00660">
    <property type="entry name" value="FERM_1"/>
    <property type="match status" value="1"/>
</dbReference>
<dbReference type="PROSITE" id="PS50057">
    <property type="entry name" value="FERM_3"/>
    <property type="match status" value="1"/>
</dbReference>
<dbReference type="PROSITE" id="PS50003">
    <property type="entry name" value="PH_DOMAIN"/>
    <property type="match status" value="2"/>
</dbReference>
<sequence>MGEIEQRPTPGSRLGAPENSGISTLERGQKPPPTPSGKLVSIKIQMLDDTQEAFEVPQRAPGKVLLDAVCNHLNLVEGDYFGLEFPDHKKITVWLDLLKPIVKQIRRPKHVVVKFVVKFFPPDHTQLQEELTRYLFALQVKQDLAQGRLTCNDTSAALLISHIVQSEIGDFDEALDREHLAKNKYIPQQDALEDKIVEFHHNHIGQTPAESDFQLLEIARRLEMYGIRLHPAKDREGTKINLAVANTGILVFQGFTKINAFNWAKVRKLSFKRKRFLIKLRPDANSAYQDTLEFLMASRDFCKSFWKICVEHHAFFRLFEEPKPKPKPVLFSRGSSFRFSGRTQKQVLDYVKEGGHKKVQFERKHSKIHSIRSLASQPTELNSEVLEQSQQSTSLTFGEGAESPGGQSCRRGKEPKVSAGEPGSHPSPAPRRSPAGNKQADGAASAPTEEEEEVVKDRTQQSKPQPPQPSTGSLTGSPHLSELSVNSQGGVAPANVTLSPNLSPDTKQASPLISPLLNDQACPRTDDEDEGRRKRFPTDKAYFIAKEVSTTERTYLKDLEVITSWFQSTVSKEDAMPEALKSLIFPNFEPLHKFHTNFLKEIEQRLALWEGRSNAQIRDYQRIGDVMLKNIQGMKHLAAHLWKHSEALEALENGIKSSRRLENFCRDFELQKVCYLPLNTFLLRPLHRLMHYKQVLERLCKHHPPSHADFRDCRAALAEITEMVAQLHGTMIKMENFQKLHELKKDLIGIDNLVVPGREFIRLGSLSKLSGKGLQQRMFFLFNDVLLYTSRGLTASNQFKVHGQLPLYGMTIEESEDEWGVPHCLTLRGQRQSIIVAASSRSEMEKWVEDIQMAIDLAEKSSSPAPEFLASSPPDNKSPDEATAADQESEDDLSASRTSLERQAPHRGNTMVHVCWHRNTSVSMVDFSIAVENQLSGNLLRKFKNSNGWQKLWVVFTNFCLFFYKSHQDNHPLASLPLLGYSLTIPSESENIQKDYVFKLHFKSHVYYFRAESEYTFERWMEVIRSATSSASRPHVLSHKESLVY</sequence>
<accession>Q9Y4F1</accession>
<accession>Q5JVI9</accession>
<accession>Q6IQ29</accession>
<organism>
    <name type="scientific">Homo sapiens</name>
    <name type="common">Human</name>
    <dbReference type="NCBI Taxonomy" id="9606"/>
    <lineage>
        <taxon>Eukaryota</taxon>
        <taxon>Metazoa</taxon>
        <taxon>Chordata</taxon>
        <taxon>Craniata</taxon>
        <taxon>Vertebrata</taxon>
        <taxon>Euteleostomi</taxon>
        <taxon>Mammalia</taxon>
        <taxon>Eutheria</taxon>
        <taxon>Euarchontoglires</taxon>
        <taxon>Primates</taxon>
        <taxon>Haplorrhini</taxon>
        <taxon>Catarrhini</taxon>
        <taxon>Hominidae</taxon>
        <taxon>Homo</taxon>
    </lineage>
</organism>
<keyword id="KW-0002">3D-structure</keyword>
<keyword id="KW-0025">Alternative splicing</keyword>
<keyword id="KW-1003">Cell membrane</keyword>
<keyword id="KW-0966">Cell projection</keyword>
<keyword id="KW-0963">Cytoplasm</keyword>
<keyword id="KW-0217">Developmental protein</keyword>
<keyword id="KW-0344">Guanine-nucleotide releasing factor</keyword>
<keyword id="KW-0472">Membrane</keyword>
<keyword id="KW-0597">Phosphoprotein</keyword>
<keyword id="KW-1267">Proteomics identification</keyword>
<keyword id="KW-1185">Reference proteome</keyword>
<keyword id="KW-0677">Repeat</keyword>
<keyword id="KW-0770">Synapse</keyword>
<keyword id="KW-0771">Synaptosome</keyword>
<comment type="function">
    <text evidence="1">Functions as a guanine nucleotide exchange factor for RAC1. May play a role in semaphorin signaling. Plays a role in the assembly and disassembly of dendritic filopodia, the formation of dendritic spines, regulation of dendrite length and ultimately the formation of synapses (By similarity).</text>
</comment>
<comment type="subunit">
    <text evidence="1">Interacts with CADM1. Interacts with RAC1 (By similarity).</text>
</comment>
<comment type="interaction">
    <interactant intactId="EBI-5235630">
        <id>Q9Y4F1</id>
    </interactant>
    <interactant intactId="EBI-357318">
        <id>Q9NWS0</id>
        <label>PIH1D1</label>
    </interactant>
    <organismsDiffer>false</organismsDiffer>
    <experiments>3</experiments>
</comment>
<comment type="subcellular location">
    <subcellularLocation>
        <location>Cell membrane</location>
        <topology>Peripheral membrane protein</topology>
        <orientation>Cytoplasmic side</orientation>
    </subcellularLocation>
    <subcellularLocation>
        <location>Synapse</location>
    </subcellularLocation>
    <subcellularLocation>
        <location evidence="1">Synapse</location>
        <location evidence="1">Synaptosome</location>
    </subcellularLocation>
    <subcellularLocation>
        <location evidence="1">Cytoplasm</location>
        <location evidence="1">Cytosol</location>
    </subcellularLocation>
    <subcellularLocation>
        <location evidence="1">Cell projection</location>
        <location evidence="1">Filopodium</location>
    </subcellularLocation>
    <subcellularLocation>
        <location evidence="1">Cell projection</location>
        <location evidence="1">Dendrite</location>
    </subcellularLocation>
    <subcellularLocation>
        <location evidence="1">Cell projection</location>
        <location evidence="1">Dendritic spine</location>
    </subcellularLocation>
    <text evidence="1">Recruited to the cell membrane via interaction with CADM1.</text>
</comment>
<comment type="alternative products">
    <event type="alternative splicing"/>
    <isoform>
        <id>Q9Y4F1-1</id>
        <name>1</name>
        <sequence type="displayed"/>
    </isoform>
    <isoform>
        <id>Q9Y4F1-2</id>
        <name>2</name>
        <sequence type="described" ref="VSP_017976"/>
    </isoform>
    <isoform>
        <id>Q9Y4F1-3</id>
        <name>3</name>
        <sequence type="described" ref="VSP_040989 VSP_040990"/>
    </isoform>
</comment>
<comment type="tissue specificity">
    <text evidence="9">Detected in cAMP-treated chondrocytes, but not in untreated chondrocytes. Detected in fetal brain, heart and spleen, and in adult testis, kidney and lung.</text>
</comment>
<comment type="induction">
    <text evidence="9">Up-regulated in response to cAMP in cultured embryonic chondrocytes.</text>
</comment>
<comment type="domain">
    <text evidence="8">Intramolecular interaction between the DH domain and the PH domains can stabilize the protein in an autoinhibited conformation.</text>
</comment>
<name>FARP1_HUMAN</name>
<feature type="chain" id="PRO_0000232753" description="FERM, ARHGEF and pleckstrin domain-containing protein 1">
    <location>
        <begin position="1"/>
        <end position="1045"/>
    </location>
</feature>
<feature type="domain" description="FERM" evidence="4">
    <location>
        <begin position="40"/>
        <end position="320"/>
    </location>
</feature>
<feature type="domain" description="DH" evidence="3">
    <location>
        <begin position="540"/>
        <end position="730"/>
    </location>
</feature>
<feature type="domain" description="PH 1" evidence="5">
    <location>
        <begin position="759"/>
        <end position="856"/>
    </location>
</feature>
<feature type="domain" description="PH 2" evidence="5">
    <location>
        <begin position="932"/>
        <end position="1029"/>
    </location>
</feature>
<feature type="region of interest" description="Disordered" evidence="6">
    <location>
        <begin position="1"/>
        <end position="37"/>
    </location>
</feature>
<feature type="region of interest" description="Disordered" evidence="6">
    <location>
        <begin position="361"/>
        <end position="534"/>
    </location>
</feature>
<feature type="region of interest" description="Disordered" evidence="6">
    <location>
        <begin position="864"/>
        <end position="903"/>
    </location>
</feature>
<feature type="compositionally biased region" description="Polar residues" evidence="6">
    <location>
        <begin position="373"/>
        <end position="396"/>
    </location>
</feature>
<feature type="compositionally biased region" description="Polar residues" evidence="6">
    <location>
        <begin position="471"/>
        <end position="489"/>
    </location>
</feature>
<feature type="compositionally biased region" description="Polar residues" evidence="6">
    <location>
        <begin position="496"/>
        <end position="511"/>
    </location>
</feature>
<feature type="modified residue" description="Phosphoserine" evidence="2">
    <location>
        <position position="20"/>
    </location>
</feature>
<feature type="modified residue" description="Phosphoserine" evidence="2">
    <location>
        <position position="23"/>
    </location>
</feature>
<feature type="modified residue" description="Phosphothreonine" evidence="15 16 18">
    <location>
        <position position="24"/>
    </location>
</feature>
<feature type="modified residue" description="Phosphoserine" evidence="15">
    <location>
        <position position="340"/>
    </location>
</feature>
<feature type="modified residue" description="Phosphoserine" evidence="19">
    <location>
        <position position="373"/>
    </location>
</feature>
<feature type="modified residue" description="Phosphoserine" evidence="2">
    <location>
        <position position="389"/>
    </location>
</feature>
<feature type="modified residue" description="Phosphoserine" evidence="19">
    <location>
        <position position="403"/>
    </location>
</feature>
<feature type="modified residue" description="Phosphoserine" evidence="19">
    <location>
        <position position="418"/>
    </location>
</feature>
<feature type="modified residue" description="Phosphoserine" evidence="12 13 16 19">
    <location>
        <position position="427"/>
    </location>
</feature>
<feature type="modified residue" description="Phosphoserine" evidence="2">
    <location>
        <position position="433"/>
    </location>
</feature>
<feature type="modified residue" description="Phosphoserine" evidence="16">
    <location>
        <position position="510"/>
    </location>
</feature>
<feature type="modified residue" description="Phosphoserine" evidence="16">
    <location>
        <position position="514"/>
    </location>
</feature>
<feature type="modified residue" description="Phosphoserine" evidence="19">
    <location>
        <position position="833"/>
    </location>
</feature>
<feature type="modified residue" description="Phosphoserine" evidence="17 19">
    <location>
        <position position="872"/>
    </location>
</feature>
<feature type="modified residue" description="Phosphoserine" evidence="2">
    <location>
        <position position="878"/>
    </location>
</feature>
<feature type="modified residue" description="Phosphothreonine" evidence="19">
    <location>
        <position position="883"/>
    </location>
</feature>
<feature type="modified residue" description="Phosphoserine" evidence="14 17 19">
    <location>
        <position position="889"/>
    </location>
</feature>
<feature type="modified residue" description="Phosphoserine" evidence="2">
    <location>
        <position position="896"/>
    </location>
</feature>
<feature type="modified residue" description="Phosphoserine" evidence="2">
    <location>
        <position position="899"/>
    </location>
</feature>
<feature type="splice variant" id="VSP_040989" description="In isoform 3." evidence="10">
    <original>QRAPGKVLLDAVCNHLNLVEGDYFGLEFPDHKKITVWLDLLKPIVKQIRRPKHVVVKFVVKFFPPDHTQLQE</original>
    <variation>MVSSSSFLKATGSSWTGWVLRCSMKPKHHSHLIEKFGEDRILTHLTGSISYTNWAGSRSLAVTVTEELLNLF</variation>
    <location>
        <begin position="58"/>
        <end position="129"/>
    </location>
</feature>
<feature type="splice variant" id="VSP_040990" description="In isoform 3." evidence="10">
    <location>
        <begin position="130"/>
        <end position="1045"/>
    </location>
</feature>
<feature type="splice variant" id="VSP_017976" description="In isoform 2." evidence="10">
    <original>R</original>
    <variation>RPGSFSLMRTPHLGQARRIPCAPERRPLLLVK</variation>
    <location>
        <position position="758"/>
    </location>
</feature>
<feature type="sequence variant" id="VAR_048362" description="In dbSNP:rs9300466.">
    <original>P</original>
    <variation>L</variation>
    <location>
        <position position="8"/>
    </location>
</feature>
<feature type="sequence variant" id="VAR_035851" description="In a breast cancer sample; somatic mutation; dbSNP:rs1458028855." evidence="7">
    <original>R</original>
    <variation>L</variation>
    <location>
        <position position="714"/>
    </location>
</feature>
<feature type="sequence conflict" description="In Ref. 3; AAH71592." evidence="11" ref="3">
    <original>H</original>
    <variation>Y</variation>
    <location>
        <position position="644"/>
    </location>
</feature>
<evidence type="ECO:0000250" key="1"/>
<evidence type="ECO:0000250" key="2">
    <source>
        <dbReference type="UniProtKB" id="F8VPU2"/>
    </source>
</evidence>
<evidence type="ECO:0000255" key="3">
    <source>
        <dbReference type="PROSITE-ProRule" id="PRU00062"/>
    </source>
</evidence>
<evidence type="ECO:0000255" key="4">
    <source>
        <dbReference type="PROSITE-ProRule" id="PRU00084"/>
    </source>
</evidence>
<evidence type="ECO:0000255" key="5">
    <source>
        <dbReference type="PROSITE-ProRule" id="PRU00145"/>
    </source>
</evidence>
<evidence type="ECO:0000256" key="6">
    <source>
        <dbReference type="SAM" id="MobiDB-lite"/>
    </source>
</evidence>
<evidence type="ECO:0000269" key="7">
    <source>
    </source>
</evidence>
<evidence type="ECO:0000269" key="8">
    <source>
    </source>
</evidence>
<evidence type="ECO:0000269" key="9">
    <source>
    </source>
</evidence>
<evidence type="ECO:0000303" key="10">
    <source>
    </source>
</evidence>
<evidence type="ECO:0000305" key="11"/>
<evidence type="ECO:0007744" key="12">
    <source>
    </source>
</evidence>
<evidence type="ECO:0007744" key="13">
    <source>
    </source>
</evidence>
<evidence type="ECO:0007744" key="14">
    <source>
    </source>
</evidence>
<evidence type="ECO:0007744" key="15">
    <source>
    </source>
</evidence>
<evidence type="ECO:0007744" key="16">
    <source>
    </source>
</evidence>
<evidence type="ECO:0007744" key="17">
    <source>
    </source>
</evidence>
<evidence type="ECO:0007744" key="18">
    <source>
    </source>
</evidence>
<evidence type="ECO:0007744" key="19">
    <source>
    </source>
</evidence>
<gene>
    <name type="primary">FARP1</name>
    <name type="synonym">CDEP</name>
    <name type="synonym">PLEKHC2</name>
</gene>
<reference key="1">
    <citation type="journal article" date="1997" name="Biochem. Biophys. Res. Commun.">
        <title>Molecular cloning and characterization of CDEP, a novel human protein containing the ezrin-like domain of the band 4.1 superfamily and the Dbl homology domain of rho guanine nucleotide exchange factors.</title>
        <authorList>
            <person name="Koyano Y."/>
            <person name="Kawamoto T."/>
            <person name="Shen M."/>
            <person name="Yan W."/>
            <person name="Noshiro M."/>
            <person name="Fujii K."/>
            <person name="Kato Y."/>
        </authorList>
    </citation>
    <scope>NUCLEOTIDE SEQUENCE [MRNA] (ISOFORM 1)</scope>
    <scope>INDUCTION</scope>
    <scope>TISSUE SPECIFICITY</scope>
    <source>
        <tissue>Cartilage</tissue>
    </source>
</reference>
<reference key="2">
    <citation type="journal article" date="2004" name="Nature">
        <title>The DNA sequence and analysis of human chromosome 13.</title>
        <authorList>
            <person name="Dunham A."/>
            <person name="Matthews L.H."/>
            <person name="Burton J."/>
            <person name="Ashurst J.L."/>
            <person name="Howe K.L."/>
            <person name="Ashcroft K.J."/>
            <person name="Beare D.M."/>
            <person name="Burford D.C."/>
            <person name="Hunt S.E."/>
            <person name="Griffiths-Jones S."/>
            <person name="Jones M.C."/>
            <person name="Keenan S.J."/>
            <person name="Oliver K."/>
            <person name="Scott C.E."/>
            <person name="Ainscough R."/>
            <person name="Almeida J.P."/>
            <person name="Ambrose K.D."/>
            <person name="Andrews D.T."/>
            <person name="Ashwell R.I.S."/>
            <person name="Babbage A.K."/>
            <person name="Bagguley C.L."/>
            <person name="Bailey J."/>
            <person name="Bannerjee R."/>
            <person name="Barlow K.F."/>
            <person name="Bates K."/>
            <person name="Beasley H."/>
            <person name="Bird C.P."/>
            <person name="Bray-Allen S."/>
            <person name="Brown A.J."/>
            <person name="Brown J.Y."/>
            <person name="Burrill W."/>
            <person name="Carder C."/>
            <person name="Carter N.P."/>
            <person name="Chapman J.C."/>
            <person name="Clamp M.E."/>
            <person name="Clark S.Y."/>
            <person name="Clarke G."/>
            <person name="Clee C.M."/>
            <person name="Clegg S.C."/>
            <person name="Cobley V."/>
            <person name="Collins J.E."/>
            <person name="Corby N."/>
            <person name="Coville G.J."/>
            <person name="Deloukas P."/>
            <person name="Dhami P."/>
            <person name="Dunham I."/>
            <person name="Dunn M."/>
            <person name="Earthrowl M.E."/>
            <person name="Ellington A.G."/>
            <person name="Faulkner L."/>
            <person name="Frankish A.G."/>
            <person name="Frankland J."/>
            <person name="French L."/>
            <person name="Garner P."/>
            <person name="Garnett J."/>
            <person name="Gilbert J.G.R."/>
            <person name="Gilson C.J."/>
            <person name="Ghori J."/>
            <person name="Grafham D.V."/>
            <person name="Gribble S.M."/>
            <person name="Griffiths C."/>
            <person name="Hall R.E."/>
            <person name="Hammond S."/>
            <person name="Harley J.L."/>
            <person name="Hart E.A."/>
            <person name="Heath P.D."/>
            <person name="Howden P.J."/>
            <person name="Huckle E.J."/>
            <person name="Hunt P.J."/>
            <person name="Hunt A.R."/>
            <person name="Johnson C."/>
            <person name="Johnson D."/>
            <person name="Kay M."/>
            <person name="Kimberley A.M."/>
            <person name="King A."/>
            <person name="Laird G.K."/>
            <person name="Langford C.J."/>
            <person name="Lawlor S."/>
            <person name="Leongamornlert D.A."/>
            <person name="Lloyd D.M."/>
            <person name="Lloyd C."/>
            <person name="Loveland J.E."/>
            <person name="Lovell J."/>
            <person name="Martin S."/>
            <person name="Mashreghi-Mohammadi M."/>
            <person name="McLaren S.J."/>
            <person name="McMurray A."/>
            <person name="Milne S."/>
            <person name="Moore M.J.F."/>
            <person name="Nickerson T."/>
            <person name="Palmer S.A."/>
            <person name="Pearce A.V."/>
            <person name="Peck A.I."/>
            <person name="Pelan S."/>
            <person name="Phillimore B."/>
            <person name="Porter K.M."/>
            <person name="Rice C.M."/>
            <person name="Searle S."/>
            <person name="Sehra H.K."/>
            <person name="Shownkeen R."/>
            <person name="Skuce C.D."/>
            <person name="Smith M."/>
            <person name="Steward C.A."/>
            <person name="Sycamore N."/>
            <person name="Tester J."/>
            <person name="Thomas D.W."/>
            <person name="Tracey A."/>
            <person name="Tromans A."/>
            <person name="Tubby B."/>
            <person name="Wall M."/>
            <person name="Wallis J.M."/>
            <person name="West A.P."/>
            <person name="Whitehead S.L."/>
            <person name="Willey D.L."/>
            <person name="Wilming L."/>
            <person name="Wray P.W."/>
            <person name="Wright M.W."/>
            <person name="Young L."/>
            <person name="Coulson A."/>
            <person name="Durbin R.M."/>
            <person name="Hubbard T."/>
            <person name="Sulston J.E."/>
            <person name="Beck S."/>
            <person name="Bentley D.R."/>
            <person name="Rogers J."/>
            <person name="Ross M.T."/>
        </authorList>
    </citation>
    <scope>NUCLEOTIDE SEQUENCE [LARGE SCALE GENOMIC DNA]</scope>
</reference>
<reference key="3">
    <citation type="journal article" date="2004" name="Genome Res.">
        <title>The status, quality, and expansion of the NIH full-length cDNA project: the Mammalian Gene Collection (MGC).</title>
        <authorList>
            <consortium name="The MGC Project Team"/>
        </authorList>
    </citation>
    <scope>NUCLEOTIDE SEQUENCE [LARGE SCALE MRNA] (ISOFORMS 1; 2 AND 3)</scope>
    <source>
        <tissue>Brain</tissue>
        <tissue>Placenta</tissue>
        <tissue>Skin</tissue>
    </source>
</reference>
<reference key="4">
    <citation type="journal article" date="2006" name="Cell">
        <title>Global, in vivo, and site-specific phosphorylation dynamics in signaling networks.</title>
        <authorList>
            <person name="Olsen J.V."/>
            <person name="Blagoev B."/>
            <person name="Gnad F."/>
            <person name="Macek B."/>
            <person name="Kumar C."/>
            <person name="Mortensen P."/>
            <person name="Mann M."/>
        </authorList>
    </citation>
    <scope>IDENTIFICATION BY MASS SPECTROMETRY [LARGE SCALE ANALYSIS]</scope>
    <source>
        <tissue>Cervix carcinoma</tissue>
    </source>
</reference>
<reference key="5">
    <citation type="journal article" date="2007" name="J. Proteome Res.">
        <title>Improved titanium dioxide enrichment of phosphopeptides from HeLa cells and high confident phosphopeptide identification by cross-validation of MS/MS and MS/MS/MS spectra.</title>
        <authorList>
            <person name="Yu L.R."/>
            <person name="Zhu Z."/>
            <person name="Chan K.C."/>
            <person name="Issaq H.J."/>
            <person name="Dimitrov D.S."/>
            <person name="Veenstra T.D."/>
        </authorList>
    </citation>
    <scope>PHOSPHORYLATION [LARGE SCALE ANALYSIS] AT SER-427</scope>
    <scope>IDENTIFICATION BY MASS SPECTROMETRY [LARGE SCALE ANALYSIS]</scope>
    <source>
        <tissue>Cervix carcinoma</tissue>
    </source>
</reference>
<reference key="6">
    <citation type="journal article" date="2008" name="J. Proteome Res.">
        <title>Combining protein-based IMAC, peptide-based IMAC, and MudPIT for efficient phosphoproteomic analysis.</title>
        <authorList>
            <person name="Cantin G.T."/>
            <person name="Yi W."/>
            <person name="Lu B."/>
            <person name="Park S.K."/>
            <person name="Xu T."/>
            <person name="Lee J.-D."/>
            <person name="Yates J.R. III"/>
        </authorList>
    </citation>
    <scope>PHOSPHORYLATION [LARGE SCALE ANALYSIS] AT SER-427</scope>
    <scope>IDENTIFICATION BY MASS SPECTROMETRY [LARGE SCALE ANALYSIS]</scope>
    <source>
        <tissue>Cervix carcinoma</tissue>
    </source>
</reference>
<reference key="7">
    <citation type="journal article" date="2008" name="Proc. Natl. Acad. Sci. U.S.A.">
        <title>A quantitative atlas of mitotic phosphorylation.</title>
        <authorList>
            <person name="Dephoure N."/>
            <person name="Zhou C."/>
            <person name="Villen J."/>
            <person name="Beausoleil S.A."/>
            <person name="Bakalarski C.E."/>
            <person name="Elledge S.J."/>
            <person name="Gygi S.P."/>
        </authorList>
    </citation>
    <scope>PHOSPHORYLATION [LARGE SCALE ANALYSIS] AT THR-24 AND SER-340</scope>
    <scope>IDENTIFICATION BY MASS SPECTROMETRY [LARGE SCALE ANALYSIS]</scope>
    <source>
        <tissue>Cervix carcinoma</tissue>
    </source>
</reference>
<reference key="8">
    <citation type="journal article" date="2008" name="Proteomics">
        <title>Large-scale phosphoproteome analysis of human liver tissue by enrichment and fractionation of phosphopeptides with strong anion exchange chromatography.</title>
        <authorList>
            <person name="Han G."/>
            <person name="Ye M."/>
            <person name="Zhou H."/>
            <person name="Jiang X."/>
            <person name="Feng S."/>
            <person name="Jiang X."/>
            <person name="Tian R."/>
            <person name="Wan D."/>
            <person name="Zou H."/>
            <person name="Gu J."/>
        </authorList>
    </citation>
    <scope>PHOSPHORYLATION [LARGE SCALE ANALYSIS] AT SER-889</scope>
    <scope>IDENTIFICATION BY MASS SPECTROMETRY [LARGE SCALE ANALYSIS]</scope>
    <source>
        <tissue>Liver</tissue>
    </source>
</reference>
<reference key="9">
    <citation type="journal article" date="2009" name="Anal. Chem.">
        <title>Lys-N and trypsin cover complementary parts of the phosphoproteome in a refined SCX-based approach.</title>
        <authorList>
            <person name="Gauci S."/>
            <person name="Helbig A.O."/>
            <person name="Slijper M."/>
            <person name="Krijgsveld J."/>
            <person name="Heck A.J."/>
            <person name="Mohammed S."/>
        </authorList>
    </citation>
    <scope>IDENTIFICATION BY MASS SPECTROMETRY [LARGE SCALE ANALYSIS]</scope>
</reference>
<reference key="10">
    <citation type="journal article" date="2010" name="Sci. Signal.">
        <title>Quantitative phosphoproteomics reveals widespread full phosphorylation site occupancy during mitosis.</title>
        <authorList>
            <person name="Olsen J.V."/>
            <person name="Vermeulen M."/>
            <person name="Santamaria A."/>
            <person name="Kumar C."/>
            <person name="Miller M.L."/>
            <person name="Jensen L.J."/>
            <person name="Gnad F."/>
            <person name="Cox J."/>
            <person name="Jensen T.S."/>
            <person name="Nigg E.A."/>
            <person name="Brunak S."/>
            <person name="Mann M."/>
        </authorList>
    </citation>
    <scope>PHOSPHORYLATION [LARGE SCALE ANALYSIS] AT THR-24; SER-427; SER-510 AND SER-514</scope>
    <scope>IDENTIFICATION BY MASS SPECTROMETRY [LARGE SCALE ANALYSIS]</scope>
    <source>
        <tissue>Cervix carcinoma</tissue>
    </source>
</reference>
<reference key="11">
    <citation type="journal article" date="2011" name="BMC Syst. Biol.">
        <title>Initial characterization of the human central proteome.</title>
        <authorList>
            <person name="Burkard T.R."/>
            <person name="Planyavsky M."/>
            <person name="Kaupe I."/>
            <person name="Breitwieser F.P."/>
            <person name="Buerckstuemmer T."/>
            <person name="Bennett K.L."/>
            <person name="Superti-Furga G."/>
            <person name="Colinge J."/>
        </authorList>
    </citation>
    <scope>IDENTIFICATION BY MASS SPECTROMETRY [LARGE SCALE ANALYSIS]</scope>
</reference>
<reference key="12">
    <citation type="journal article" date="2011" name="Sci. Signal.">
        <title>System-wide temporal characterization of the proteome and phosphoproteome of human embryonic stem cell differentiation.</title>
        <authorList>
            <person name="Rigbolt K.T."/>
            <person name="Prokhorova T.A."/>
            <person name="Akimov V."/>
            <person name="Henningsen J."/>
            <person name="Johansen P.T."/>
            <person name="Kratchmarova I."/>
            <person name="Kassem M."/>
            <person name="Mann M."/>
            <person name="Olsen J.V."/>
            <person name="Blagoev B."/>
        </authorList>
    </citation>
    <scope>PHOSPHORYLATION [LARGE SCALE ANALYSIS] AT SER-872 AND SER-889</scope>
    <scope>IDENTIFICATION BY MASS SPECTROMETRY [LARGE SCALE ANALYSIS]</scope>
</reference>
<reference key="13">
    <citation type="journal article" date="2013" name="J. Proteome Res.">
        <title>Toward a comprehensive characterization of a human cancer cell phosphoproteome.</title>
        <authorList>
            <person name="Zhou H."/>
            <person name="Di Palma S."/>
            <person name="Preisinger C."/>
            <person name="Peng M."/>
            <person name="Polat A.N."/>
            <person name="Heck A.J."/>
            <person name="Mohammed S."/>
        </authorList>
    </citation>
    <scope>PHOSPHORYLATION [LARGE SCALE ANALYSIS] AT THR-24</scope>
    <scope>IDENTIFICATION BY MASS SPECTROMETRY [LARGE SCALE ANALYSIS]</scope>
    <source>
        <tissue>Cervix carcinoma</tissue>
    </source>
</reference>
<reference key="14">
    <citation type="journal article" date="2014" name="J. Proteomics">
        <title>An enzyme assisted RP-RPLC approach for in-depth analysis of human liver phosphoproteome.</title>
        <authorList>
            <person name="Bian Y."/>
            <person name="Song C."/>
            <person name="Cheng K."/>
            <person name="Dong M."/>
            <person name="Wang F."/>
            <person name="Huang J."/>
            <person name="Sun D."/>
            <person name="Wang L."/>
            <person name="Ye M."/>
            <person name="Zou H."/>
        </authorList>
    </citation>
    <scope>PHOSPHORYLATION [LARGE SCALE ANALYSIS] AT SER-373; SER-403; SER-418; SER-427; SER-833; SER-872; THR-883 AND SER-889</scope>
    <scope>IDENTIFICATION BY MASS SPECTROMETRY [LARGE SCALE ANALYSIS]</scope>
    <source>
        <tissue>Liver</tissue>
    </source>
</reference>
<reference key="15">
    <citation type="journal article" date="2013" name="Structure">
        <title>Structural basis for autoinhibition of the guanine nucleotide exchange factor FARP2.</title>
        <authorList>
            <person name="He X."/>
            <person name="Kuo Y.C."/>
            <person name="Rosche T.J."/>
            <person name="Zhang X."/>
        </authorList>
    </citation>
    <scope>X-RAY CRYSTALLOGRAPHY (4.09 ANGSTROMS) OF 539-1035</scope>
    <scope>DOMAIN</scope>
</reference>
<reference key="16">
    <citation type="journal article" date="2006" name="Science">
        <title>The consensus coding sequences of human breast and colorectal cancers.</title>
        <authorList>
            <person name="Sjoeblom T."/>
            <person name="Jones S."/>
            <person name="Wood L.D."/>
            <person name="Parsons D.W."/>
            <person name="Lin J."/>
            <person name="Barber T.D."/>
            <person name="Mandelker D."/>
            <person name="Leary R.J."/>
            <person name="Ptak J."/>
            <person name="Silliman N."/>
            <person name="Szabo S."/>
            <person name="Buckhaults P."/>
            <person name="Farrell C."/>
            <person name="Meeh P."/>
            <person name="Markowitz S.D."/>
            <person name="Willis J."/>
            <person name="Dawson D."/>
            <person name="Willson J.K.V."/>
            <person name="Gazdar A.F."/>
            <person name="Hartigan J."/>
            <person name="Wu L."/>
            <person name="Liu C."/>
            <person name="Parmigiani G."/>
            <person name="Park B.H."/>
            <person name="Bachman K.E."/>
            <person name="Papadopoulos N."/>
            <person name="Vogelstein B."/>
            <person name="Kinzler K.W."/>
            <person name="Velculescu V.E."/>
        </authorList>
    </citation>
    <scope>VARIANT [LARGE SCALE ANALYSIS] LEU-714</scope>
</reference>
<proteinExistence type="evidence at protein level"/>